<keyword id="KW-0408">Iron</keyword>
<keyword id="KW-0479">Metal-binding</keyword>
<feature type="chain" id="PRO_1000096256" description="Iron-sulfur cluster assembly protein CyaY">
    <location>
        <begin position="1"/>
        <end position="106"/>
    </location>
</feature>
<reference key="1">
    <citation type="journal article" date="2011" name="J. Bacteriol.">
        <title>Comparative genomics of 28 Salmonella enterica isolates: evidence for CRISPR-mediated adaptive sublineage evolution.</title>
        <authorList>
            <person name="Fricke W.F."/>
            <person name="Mammel M.K."/>
            <person name="McDermott P.F."/>
            <person name="Tartera C."/>
            <person name="White D.G."/>
            <person name="Leclerc J.E."/>
            <person name="Ravel J."/>
            <person name="Cebula T.A."/>
        </authorList>
    </citation>
    <scope>NUCLEOTIDE SEQUENCE [LARGE SCALE GENOMIC DNA]</scope>
    <source>
        <strain>SL254</strain>
    </source>
</reference>
<dbReference type="EMBL" id="CP001113">
    <property type="protein sequence ID" value="ACF62274.1"/>
    <property type="molecule type" value="Genomic_DNA"/>
</dbReference>
<dbReference type="RefSeq" id="WP_000999921.1">
    <property type="nucleotide sequence ID" value="NZ_CCMR01000001.1"/>
</dbReference>
<dbReference type="SMR" id="B4SZ48"/>
<dbReference type="KEGG" id="see:SNSL254_A4222"/>
<dbReference type="HOGENOM" id="CLU_080880_3_0_6"/>
<dbReference type="Proteomes" id="UP000008824">
    <property type="component" value="Chromosome"/>
</dbReference>
<dbReference type="GO" id="GO:0005829">
    <property type="term" value="C:cytosol"/>
    <property type="evidence" value="ECO:0007669"/>
    <property type="project" value="TreeGrafter"/>
</dbReference>
<dbReference type="GO" id="GO:0008199">
    <property type="term" value="F:ferric iron binding"/>
    <property type="evidence" value="ECO:0007669"/>
    <property type="project" value="InterPro"/>
</dbReference>
<dbReference type="GO" id="GO:0008198">
    <property type="term" value="F:ferrous iron binding"/>
    <property type="evidence" value="ECO:0007669"/>
    <property type="project" value="TreeGrafter"/>
</dbReference>
<dbReference type="GO" id="GO:0016226">
    <property type="term" value="P:iron-sulfur cluster assembly"/>
    <property type="evidence" value="ECO:0007669"/>
    <property type="project" value="UniProtKB-UniRule"/>
</dbReference>
<dbReference type="CDD" id="cd00503">
    <property type="entry name" value="Frataxin"/>
    <property type="match status" value="1"/>
</dbReference>
<dbReference type="FunFam" id="3.30.920.10:FF:000001">
    <property type="entry name" value="Iron-sulfur cluster assembly protein CyaY"/>
    <property type="match status" value="1"/>
</dbReference>
<dbReference type="Gene3D" id="3.30.920.10">
    <property type="entry name" value="Frataxin/CyaY"/>
    <property type="match status" value="1"/>
</dbReference>
<dbReference type="HAMAP" id="MF_00142">
    <property type="entry name" value="CyaY"/>
    <property type="match status" value="1"/>
</dbReference>
<dbReference type="InterPro" id="IPR047584">
    <property type="entry name" value="CyaY"/>
</dbReference>
<dbReference type="InterPro" id="IPR002908">
    <property type="entry name" value="Frataxin/CyaY"/>
</dbReference>
<dbReference type="InterPro" id="IPR036524">
    <property type="entry name" value="Frataxin/CyaY_sf"/>
</dbReference>
<dbReference type="InterPro" id="IPR020895">
    <property type="entry name" value="Frataxin_CS"/>
</dbReference>
<dbReference type="NCBIfam" id="TIGR03421">
    <property type="entry name" value="FeS_CyaY"/>
    <property type="match status" value="1"/>
</dbReference>
<dbReference type="PANTHER" id="PTHR16821">
    <property type="entry name" value="FRATAXIN"/>
    <property type="match status" value="1"/>
</dbReference>
<dbReference type="PANTHER" id="PTHR16821:SF2">
    <property type="entry name" value="FRATAXIN, MITOCHONDRIAL"/>
    <property type="match status" value="1"/>
</dbReference>
<dbReference type="Pfam" id="PF01491">
    <property type="entry name" value="Frataxin_Cyay"/>
    <property type="match status" value="1"/>
</dbReference>
<dbReference type="SMART" id="SM01219">
    <property type="entry name" value="Frataxin_Cyay"/>
    <property type="match status" value="1"/>
</dbReference>
<dbReference type="SUPFAM" id="SSF55387">
    <property type="entry name" value="Frataxin/Nqo15-like"/>
    <property type="match status" value="1"/>
</dbReference>
<dbReference type="PROSITE" id="PS01344">
    <property type="entry name" value="FRATAXIN_1"/>
    <property type="match status" value="1"/>
</dbReference>
<dbReference type="PROSITE" id="PS50810">
    <property type="entry name" value="FRATAXIN_2"/>
    <property type="match status" value="1"/>
</dbReference>
<organism>
    <name type="scientific">Salmonella newport (strain SL254)</name>
    <dbReference type="NCBI Taxonomy" id="423368"/>
    <lineage>
        <taxon>Bacteria</taxon>
        <taxon>Pseudomonadati</taxon>
        <taxon>Pseudomonadota</taxon>
        <taxon>Gammaproteobacteria</taxon>
        <taxon>Enterobacterales</taxon>
        <taxon>Enterobacteriaceae</taxon>
        <taxon>Salmonella</taxon>
    </lineage>
</organism>
<evidence type="ECO:0000255" key="1">
    <source>
        <dbReference type="HAMAP-Rule" id="MF_00142"/>
    </source>
</evidence>
<accession>B4SZ48</accession>
<name>CYAY_SALNS</name>
<proteinExistence type="inferred from homology"/>
<gene>
    <name evidence="1" type="primary">cyaY</name>
    <name type="ordered locus">SNSL254_A4222</name>
</gene>
<comment type="function">
    <text evidence="1">Involved in iron-sulfur (Fe-S) cluster assembly. May act as a regulator of Fe-S biogenesis.</text>
</comment>
<comment type="similarity">
    <text evidence="1">Belongs to the frataxin family.</text>
</comment>
<sequence length="106" mass="12230">MNDSEFHRLADALWLTIEERLDNWDGDSDIDCEINGGVLTLSFENGSKIIINRQEPLHQVWLATKQGGYHFDLKDDEWVCDRSGETFWDLLEQAATQQAGEKVSFR</sequence>
<protein>
    <recommendedName>
        <fullName evidence="1">Iron-sulfur cluster assembly protein CyaY</fullName>
    </recommendedName>
</protein>